<gene>
    <name evidence="19" type="primary">IFT140</name>
    <name type="synonym">KIAA0590</name>
    <name type="synonym">WDTC2</name>
</gene>
<sequence>MALYYDHQIEAPDAAGSPSFISWHPVHPFLAVAYISTTSTGSVDIYLEQGECVPDTHVERPFRVASLCWHPTRLVLAVGWETGEVTVFNKQDKEQHTMPLTHTADITVLRWSPSGNCLLSGDRLGVLLLWRLDQRGRVQGTPLLKHEYGKHLTHCIFRLPPPGEDLVQLAKAAVSGDEKALDMFNWKKSSSGSLLKMGSHEGLLFFVSLMDGTVHYVDEKGKTTQVVSADSTIQMLFYMEKREALVVVTENLRLSLYTVPPEGKAEEVMKVKLSGKTGRRADIALIEGSLLVMAVGEAALRFWDIERGENYILSPDEKFGFEKGENMNCVCYCKVKGLLAAGTDRGRVAMWRKVPDFLGSPGAEGKDRWALQTPTELQGNITQIQWGSRKNLLAVNSVISVAILSERAMSSHFHQQVAAMQVSPSLLNVCFLSTGVAHSLRTDMHISGVFATKDAVAVWNGRQVAIFELSGAAIRSAGTFLCETPVLAMHEENVYTVESNRVQVRTWQGTVKQLLLFSETEGNPCFLDICGNFLVVGTDLAHFKSFDLSRREAKAHCSCRSLAELVPGVGGIASLRCSSSGSTISILPSKADNSPDSKICFYDVEMDTVTVFDFKTGQIDRRETLSFNEQETNKSHLFVDEGLKNYVPVNHFWDQSEPRLFVCEAVQETPRSQPQSANGQPQDGRAGPAADVLILSFFISEEHGFLLHESFPRPATSHSLLGMEVPYYYFTRKPEEADREDEVEPGCHHIPQMVSRRPLRDFVGLEDCDKATRDAMLHFSFFVTIGDMDEAFKSIKLIKSEAVWENMARMCVKTQRLDVAKVCLGNMGHARGARALREAEQEPELEARVAVLATQLGMLEDAEQLYRKCKRHDLLNKFYQAAGRWQEALQVAEHHDRVHLRSTYHRYAGHLEASADCSRALSYYEKSDTHRFEVPRMLSEDLPSLELYVNKMKDKTLWRWWAQYLESQGEMDAALHYYELARDHFSLVRIHCFQGNVQKAAQIANETGNLAASYHLARQYESQEEVGQAVHFYTRAQAFKNAIRLCKENGLDDQLMNLALLSSPEDMIEAARYYEEKGVQMDRAVMLYHKAGHFSKALELAFATQQFVALQLIAEDLDETSDPALLARCSDFFIEHSQYERAVELLLAARKYQEALQLCLGQNMSITEEMAEKMTVAKDSSDLPEESRRELLEQIADCCMRQGSYHLATKKYTQAGNKLKAMRALLKSGDTEKITFFASVSRQKEIYIMAANYLQSLDWRKEPEIMKNIIGFYTKGRALDLLAGFYDACAQVEIDEYQNYDKAHGALTEAYKCLAKAKAKSPLDQETRLAQLQSRMALVKRFIQARRTYTEDPKESIKQCELLLEEPDLDSTIRIGDVYGFLVEHYVRKEEYQTAYRFLEEMRRRLPLANMSYYVSPQAVDAVHRGLGLPLPRTVPEQVRHNSMEDARELDEEVVEEADDDP</sequence>
<protein>
    <recommendedName>
        <fullName evidence="18">Intraflagellar transport protein 140 homolog</fullName>
    </recommendedName>
    <alternativeName>
        <fullName>WD and tetratricopeptide repeats protein 2</fullName>
    </alternativeName>
</protein>
<feature type="chain" id="PRO_0000051046" description="Intraflagellar transport protein 140 homolog">
    <location>
        <begin position="1"/>
        <end position="1462"/>
    </location>
</feature>
<feature type="repeat" description="WD 1">
    <location>
        <begin position="4"/>
        <end position="48"/>
    </location>
</feature>
<feature type="repeat" description="WD 2">
    <location>
        <begin position="51"/>
        <end position="90"/>
    </location>
</feature>
<feature type="repeat" description="WD 3">
    <location>
        <begin position="93"/>
        <end position="132"/>
    </location>
</feature>
<feature type="repeat" description="WD 4">
    <location>
        <begin position="139"/>
        <end position="188"/>
    </location>
</feature>
<feature type="repeat" description="WD 5">
    <location>
        <begin position="221"/>
        <end position="259"/>
    </location>
</feature>
<feature type="repeat" description="WD 6">
    <location>
        <begin position="266"/>
        <end position="305"/>
    </location>
</feature>
<feature type="repeat" description="WD 7">
    <location>
        <begin position="322"/>
        <end position="361"/>
    </location>
</feature>
<feature type="repeat" description="TPR 1">
    <location>
        <begin position="772"/>
        <end position="807"/>
    </location>
</feature>
<feature type="repeat" description="TPR 2">
    <location>
        <begin position="869"/>
        <end position="904"/>
    </location>
</feature>
<feature type="repeat" description="TPR 3">
    <location>
        <begin position="906"/>
        <end position="934"/>
    </location>
</feature>
<feature type="repeat" description="TPR 4">
    <location>
        <begin position="955"/>
        <end position="988"/>
    </location>
</feature>
<feature type="repeat" description="TPR 5">
    <location>
        <begin position="1010"/>
        <end position="1043"/>
    </location>
</feature>
<feature type="repeat" description="TPR 6">
    <location>
        <begin position="1078"/>
        <end position="1111"/>
    </location>
</feature>
<feature type="repeat" description="TPR 7">
    <location>
        <begin position="1123"/>
        <end position="1156"/>
    </location>
</feature>
<feature type="repeat" description="TPR 8">
    <location>
        <begin position="1189"/>
        <end position="1222"/>
    </location>
</feature>
<feature type="repeat" description="TPR 9">
    <location>
        <begin position="1376"/>
        <end position="1409"/>
    </location>
</feature>
<feature type="region of interest" description="Disordered" evidence="2">
    <location>
        <begin position="1434"/>
        <end position="1462"/>
    </location>
</feature>
<feature type="compositionally biased region" description="Basic and acidic residues" evidence="2">
    <location>
        <begin position="1438"/>
        <end position="1447"/>
    </location>
</feature>
<feature type="compositionally biased region" description="Acidic residues" evidence="2">
    <location>
        <begin position="1448"/>
        <end position="1462"/>
    </location>
</feature>
<feature type="modified residue" description="Phosphoserine" evidence="21">
    <location>
        <position position="360"/>
    </location>
</feature>
<feature type="modified residue" description="Phosphoserine" evidence="20">
    <location>
        <position position="1443"/>
    </location>
</feature>
<feature type="splice variant" id="VSP_056392" description="In isoform 2." evidence="17">
    <location>
        <begin position="1"/>
        <end position="806"/>
    </location>
</feature>
<feature type="sequence variant" id="VAR_080667" description="In RP80; uncertain significance; dbSNP:rs772757427." evidence="8">
    <original>P</original>
    <variation>L</variation>
    <location>
        <position position="71"/>
    </location>
</feature>
<feature type="sequence variant" id="VAR_070999" description="In dbSNP:rs371077545." evidence="5">
    <original>R</original>
    <variation>H</variation>
    <location>
        <position position="110"/>
    </location>
</feature>
<feature type="sequence variant" id="VAR_071000" description="In SRTD9; dbSNP:rs1403669200." evidence="5">
    <original>L</original>
    <variation>F</variation>
    <location>
        <position position="152"/>
    </location>
</feature>
<feature type="sequence variant" id="VAR_071001" description="In dbSNP:rs148462329." evidence="5">
    <original>P</original>
    <variation>T</variation>
    <location>
        <position position="161"/>
    </location>
</feature>
<feature type="sequence variant" id="VAR_053396" description="In dbSNP:rs35588860.">
    <original>D</original>
    <variation>A</variation>
    <location>
        <position position="165"/>
    </location>
</feature>
<feature type="sequence variant" id="VAR_068523" description="In SRTD9; partial to complete loss of basal body localization and increase of cytoplasmic localization; partial loss of function; dbSNP:rs201188361." evidence="4 12 13">
    <original>G</original>
    <variation>R</variation>
    <location>
        <position position="212"/>
    </location>
</feature>
<feature type="sequence variant" id="VAR_068524" description="In SRTD9." evidence="4">
    <original>I</original>
    <variation>M</variation>
    <location>
        <position position="233"/>
    </location>
</feature>
<feature type="sequence variant" id="VAR_071002" description="In dbSNP:rs539181813." evidence="5">
    <original>E</original>
    <variation>G</variation>
    <location>
        <position position="243"/>
    </location>
</feature>
<feature type="sequence variant" id="VAR_071003" description="In SRTD9; disease phenotype consistent with Mainzer-Saldino syndrome." evidence="5">
    <original>E</original>
    <variation>G</variation>
    <location>
        <position position="267"/>
    </location>
</feature>
<feature type="sequence variant" id="VAR_053397" description="In dbSNP:rs4786350.">
    <original>R</original>
    <variation>P</variation>
    <location>
        <position position="279"/>
    </location>
</feature>
<feature type="sequence variant" id="VAR_053398" description="In dbSNP:rs35404373.">
    <original>R</original>
    <variation>Q</variation>
    <location>
        <position position="280"/>
    </location>
</feature>
<feature type="sequence variant" id="VAR_078817" description="In SRTD9; dbSNP:rs8058674." evidence="6">
    <original>R</original>
    <variation>W</variation>
    <location>
        <position position="280"/>
    </location>
</feature>
<feature type="sequence variant" id="VAR_068525" description="In SRTD9; impairs centrosomal localization; dbSNP:rs431905521." evidence="4 5">
    <original>V</original>
    <variation>M</variation>
    <location>
        <position position="292"/>
    </location>
</feature>
<feature type="sequence variant" id="VAR_068526" description="In SRTD9; partial to complete loss of basal body localization and increase of cytoplasmic localization; dbSNP:rs387907193." evidence="4">
    <original>Y</original>
    <variation>C</variation>
    <location>
        <position position="311"/>
    </location>
</feature>
<feature type="sequence variant" id="VAR_080668" description="In RP80; uncertain significance; dbSNP:rs1441549097." evidence="8">
    <original>C</original>
    <variation>R</variation>
    <location>
        <position position="329"/>
    </location>
</feature>
<feature type="sequence variant" id="VAR_080669" description="In RP80; uncertain significance; dbSNP:rs773372123." evidence="10">
    <original>C</original>
    <variation>Y</variation>
    <location>
        <position position="333"/>
    </location>
</feature>
<feature type="sequence variant" id="VAR_080670" description="In RP80; uncertain significance; dbSNP:rs200292484." evidence="10">
    <original>A</original>
    <variation>T</variation>
    <location>
        <position position="341"/>
    </location>
</feature>
<feature type="sequence variant" id="VAR_053399" description="In dbSNP:rs34762152.">
    <original>V</original>
    <variation>I</variation>
    <location>
        <position position="398"/>
    </location>
</feature>
<feature type="sequence variant" id="VAR_080671" description="In RP80; uncertain significance; dbSNP:rs770890983." evidence="8">
    <original>A</original>
    <variation>P</variation>
    <location>
        <position position="418"/>
    </location>
</feature>
<feature type="sequence variant" id="VAR_080672" description="In RP80; uncertain significance; also found in a patient with Leber congenital amaurosis and renal failure; uncertain significance; decreased localization to the basal body; dbSNP:rs1555491448." evidence="10">
    <original>L</original>
    <variation>P</variation>
    <location>
        <position position="440"/>
    </location>
</feature>
<feature type="sequence variant" id="VAR_053400" description="In dbSNP:rs8060532.">
    <original>A</original>
    <variation>V</variation>
    <location>
        <position position="451"/>
    </location>
</feature>
<feature type="sequence variant" id="VAR_080673" description="In RP80; uncertain significance." evidence="8">
    <location>
        <begin position="459"/>
        <end position="1462"/>
    </location>
</feature>
<feature type="sequence variant" id="VAR_071004" description="In dbSNP:rs778311141." evidence="5">
    <original>W</original>
    <variation>S</variation>
    <location>
        <position position="459"/>
    </location>
</feature>
<feature type="sequence variant" id="VAR_080674" description="In RP80; uncertain significance; decreased localization to the basal body; dbSNP:rs758052634." evidence="8 10">
    <original>T</original>
    <variation>M</variation>
    <location>
        <position position="484"/>
    </location>
</feature>
<feature type="sequence variant" id="VAR_071005" description="In dbSNP:rs150903791." evidence="5">
    <original>L</original>
    <variation>H</variation>
    <location>
        <position position="514"/>
    </location>
</feature>
<feature type="sequence variant" id="VAR_068527" description="In SRTD9; dbSNP:rs199826737." evidence="4 5">
    <original>G</original>
    <variation>E</variation>
    <location>
        <position position="522"/>
    </location>
</feature>
<feature type="sequence variant" id="VAR_062098" description="In dbSNP:rs8050974.">
    <original>S</original>
    <variation>N</variation>
    <location>
        <position position="561"/>
    </location>
</feature>
<feature type="sequence variant" id="VAR_068528" description="In SRTD9; dbSNP:rs373111085." evidence="4">
    <original>R</original>
    <variation>Q</variation>
    <location>
        <position position="576"/>
    </location>
</feature>
<feature type="sequence variant" id="VAR_053401" description="In dbSNP:rs11648609.">
    <original>R</original>
    <variation>Q</variation>
    <location>
        <position position="621"/>
    </location>
</feature>
<feature type="sequence variant" id="VAR_080675" description="In RP80; uncertain significance; dbSNP:rs781117803." evidence="8">
    <original>C</original>
    <variation>W</variation>
    <location>
        <position position="663"/>
    </location>
</feature>
<feature type="sequence variant" id="VAR_068529" description="In SRTD9 and RP80; uncertain significance; partial to complete loss of basal body localization and increase of cytoplasmic localization; dbSNP:rs387907192." evidence="4 9 10">
    <original>E</original>
    <variation>K</variation>
    <location>
        <position position="664"/>
    </location>
</feature>
<feature type="sequence variant" id="VAR_053402" description="In dbSNP:rs34900355.">
    <original>P</original>
    <variation>S</variation>
    <location>
        <position position="670"/>
    </location>
</feature>
<feature type="sequence variant" id="VAR_080676" description="In SRTD9; uncertain significance." evidence="12">
    <location>
        <begin position="760"/>
        <end position="1462"/>
    </location>
</feature>
<feature type="sequence variant" id="VAR_080677" description="No effect on localization to the basal body; dbSNP:rs34535263." evidence="10">
    <original>L</original>
    <variation>R</variation>
    <location>
        <position position="777"/>
    </location>
</feature>
<feature type="sequence variant" id="VAR_071006" description="In dbSNP:rs144938800." evidence="5">
    <original>D</original>
    <variation>G</variation>
    <location>
        <position position="787"/>
    </location>
</feature>
<feature type="sequence variant" id="VAR_080678" description="In RP80; uncertain significance; dbSNP:rs751323480." evidence="8">
    <original>E</original>
    <variation>K</variation>
    <location>
        <position position="790"/>
    </location>
</feature>
<feature type="sequence variant" id="VAR_080679" description="In RP80; uncertain significance; dbSNP:rs767213195." evidence="8">
    <original>R</original>
    <variation>C</variation>
    <location>
        <position position="871"/>
    </location>
</feature>
<feature type="sequence variant" id="VAR_080680" description="In RP80; uncertain significance; decreased localization to the basal body; dbSNP:rs145549969." evidence="10">
    <original>S</original>
    <variation>P</variation>
    <location>
        <position position="939"/>
    </location>
</feature>
<feature type="sequence variant" id="VAR_080681" description="In RP80; uncertain significance; dbSNP:rs745576178." evidence="8">
    <original>A</original>
    <variation>V</variation>
    <location>
        <position position="974"/>
    </location>
</feature>
<feature type="sequence variant" id="VAR_053403" description="In dbSNP:rs2235638." evidence="16">
    <original>A</original>
    <variation>V</variation>
    <location>
        <position position="1070"/>
    </location>
</feature>
<feature type="sequence variant" id="VAR_080682" description="In RP80; uncertain significance; dbSNP:rs200065348." evidence="8">
    <original>G</original>
    <variation>R</variation>
    <location>
        <position position="1276"/>
    </location>
</feature>
<feature type="sequence variant" id="VAR_071007" description="In dbSNP:rs146666187." evidence="5">
    <original>P</original>
    <variation>R</variation>
    <location>
        <position position="1353"/>
    </location>
</feature>
<feature type="sequence variant" id="VAR_071008" description="In SRTD9; disease phenotype consistent with Mainzer-Saldino syndrome; dbSNP:rs431905520." evidence="5">
    <original>C</original>
    <variation>R</variation>
    <location>
        <position position="1360"/>
    </location>
</feature>
<feature type="sequence variant" id="VAR_080683" description="In RP80; uncertain significance; dbSNP:rs559371453." evidence="8">
    <original>L</original>
    <variation>P</variation>
    <location>
        <position position="1399"/>
    </location>
</feature>
<feature type="sequence conflict" description="In Ref. 1; BAA25516." evidence="18" ref="1">
    <original>H</original>
    <variation>L</variation>
    <location>
        <position position="542"/>
    </location>
</feature>
<feature type="strand" evidence="22">
    <location>
        <begin position="3"/>
        <end position="8"/>
    </location>
</feature>
<feature type="strand" evidence="22">
    <location>
        <begin position="17"/>
        <end position="23"/>
    </location>
</feature>
<feature type="strand" evidence="22">
    <location>
        <begin position="25"/>
        <end position="35"/>
    </location>
</feature>
<feature type="strand" evidence="22">
    <location>
        <begin position="41"/>
        <end position="47"/>
    </location>
</feature>
<feature type="strand" evidence="22">
    <location>
        <begin position="58"/>
        <end position="62"/>
    </location>
</feature>
<feature type="strand" evidence="22">
    <location>
        <begin position="64"/>
        <end position="69"/>
    </location>
</feature>
<feature type="strand" evidence="22">
    <location>
        <begin position="71"/>
        <end position="80"/>
    </location>
</feature>
<feature type="strand" evidence="22">
    <location>
        <begin position="85"/>
        <end position="89"/>
    </location>
</feature>
<feature type="turn" evidence="22">
    <location>
        <begin position="90"/>
        <end position="93"/>
    </location>
</feature>
<feature type="strand" evidence="22">
    <location>
        <begin position="94"/>
        <end position="97"/>
    </location>
</feature>
<feature type="strand" evidence="22">
    <location>
        <begin position="106"/>
        <end position="111"/>
    </location>
</feature>
<feature type="strand" evidence="22">
    <location>
        <begin position="115"/>
        <end position="122"/>
    </location>
</feature>
<feature type="strand" evidence="22">
    <location>
        <begin position="126"/>
        <end position="132"/>
    </location>
</feature>
<feature type="strand" evidence="22">
    <location>
        <begin position="143"/>
        <end position="147"/>
    </location>
</feature>
<feature type="strand" evidence="22">
    <location>
        <begin position="152"/>
        <end position="157"/>
    </location>
</feature>
<feature type="strand" evidence="22">
    <location>
        <begin position="162"/>
        <end position="165"/>
    </location>
</feature>
<feature type="helix" evidence="22">
    <location>
        <begin position="166"/>
        <end position="174"/>
    </location>
</feature>
<feature type="helix" evidence="22">
    <location>
        <begin position="178"/>
        <end position="184"/>
    </location>
</feature>
<feature type="helix" evidence="22">
    <location>
        <begin position="186"/>
        <end position="188"/>
    </location>
</feature>
<feature type="strand" evidence="22">
    <location>
        <begin position="205"/>
        <end position="209"/>
    </location>
</feature>
<feature type="strand" evidence="22">
    <location>
        <begin position="212"/>
        <end position="217"/>
    </location>
</feature>
<feature type="strand" evidence="22">
    <location>
        <begin position="223"/>
        <end position="228"/>
    </location>
</feature>
<feature type="strand" evidence="22">
    <location>
        <begin position="233"/>
        <end position="239"/>
    </location>
</feature>
<feature type="helix" evidence="22">
    <location>
        <begin position="240"/>
        <end position="242"/>
    </location>
</feature>
<feature type="strand" evidence="22">
    <location>
        <begin position="244"/>
        <end position="249"/>
    </location>
</feature>
<feature type="strand" evidence="22">
    <location>
        <begin position="253"/>
        <end position="258"/>
    </location>
</feature>
<feature type="strand" evidence="22">
    <location>
        <begin position="266"/>
        <end position="272"/>
    </location>
</feature>
<feature type="strand" evidence="22">
    <location>
        <begin position="282"/>
        <end position="286"/>
    </location>
</feature>
<feature type="turn" evidence="22">
    <location>
        <begin position="287"/>
        <end position="289"/>
    </location>
</feature>
<feature type="strand" evidence="22">
    <location>
        <begin position="290"/>
        <end position="294"/>
    </location>
</feature>
<feature type="strand" evidence="22">
    <location>
        <begin position="296"/>
        <end position="304"/>
    </location>
</feature>
<feature type="turn" evidence="22">
    <location>
        <begin position="305"/>
        <end position="308"/>
    </location>
</feature>
<feature type="strand" evidence="22">
    <location>
        <begin position="309"/>
        <end position="313"/>
    </location>
</feature>
<feature type="helix" evidence="22">
    <location>
        <begin position="317"/>
        <end position="319"/>
    </location>
</feature>
<feature type="strand" evidence="22">
    <location>
        <begin position="327"/>
        <end position="333"/>
    </location>
</feature>
<feature type="turn" evidence="22">
    <location>
        <begin position="334"/>
        <end position="337"/>
    </location>
</feature>
<feature type="strand" evidence="22">
    <location>
        <begin position="338"/>
        <end position="343"/>
    </location>
</feature>
<feature type="strand" evidence="22">
    <location>
        <begin position="346"/>
        <end position="354"/>
    </location>
</feature>
<feature type="helix" evidence="22">
    <location>
        <begin position="365"/>
        <end position="368"/>
    </location>
</feature>
<feature type="strand" evidence="22">
    <location>
        <begin position="369"/>
        <end position="371"/>
    </location>
</feature>
<feature type="strand" evidence="22">
    <location>
        <begin position="381"/>
        <end position="386"/>
    </location>
</feature>
<feature type="turn" evidence="22">
    <location>
        <begin position="389"/>
        <end position="391"/>
    </location>
</feature>
<feature type="strand" evidence="22">
    <location>
        <begin position="393"/>
        <end position="399"/>
    </location>
</feature>
<feature type="strand" evidence="22">
    <location>
        <begin position="401"/>
        <end position="408"/>
    </location>
</feature>
<feature type="strand" evidence="22">
    <location>
        <begin position="412"/>
        <end position="414"/>
    </location>
</feature>
<feature type="strand" evidence="22">
    <location>
        <begin position="417"/>
        <end position="423"/>
    </location>
</feature>
<feature type="strand" evidence="22">
    <location>
        <begin position="426"/>
        <end position="431"/>
    </location>
</feature>
<feature type="turn" evidence="22">
    <location>
        <begin position="432"/>
        <end position="434"/>
    </location>
</feature>
<feature type="strand" evidence="22">
    <location>
        <begin position="437"/>
        <end position="441"/>
    </location>
</feature>
<feature type="strand" evidence="22">
    <location>
        <begin position="447"/>
        <end position="451"/>
    </location>
</feature>
<feature type="strand" evidence="22">
    <location>
        <begin position="453"/>
        <end position="459"/>
    </location>
</feature>
<feature type="strand" evidence="22">
    <location>
        <begin position="461"/>
        <end position="470"/>
    </location>
</feature>
<feature type="strand" evidence="22">
    <location>
        <begin position="473"/>
        <end position="481"/>
    </location>
</feature>
<feature type="strand" evidence="22">
    <location>
        <begin position="487"/>
        <end position="490"/>
    </location>
</feature>
<feature type="strand" evidence="22">
    <location>
        <begin position="493"/>
        <end position="498"/>
    </location>
</feature>
<feature type="strand" evidence="22">
    <location>
        <begin position="501"/>
        <end position="505"/>
    </location>
</feature>
<feature type="strand" evidence="22">
    <location>
        <begin position="511"/>
        <end position="516"/>
    </location>
</feature>
<feature type="helix" evidence="22">
    <location>
        <begin position="519"/>
        <end position="521"/>
    </location>
</feature>
<feature type="strand" evidence="22">
    <location>
        <begin position="524"/>
        <end position="530"/>
    </location>
</feature>
<feature type="strand" evidence="22">
    <location>
        <begin position="533"/>
        <end position="538"/>
    </location>
</feature>
<feature type="strand" evidence="22">
    <location>
        <begin position="541"/>
        <end position="547"/>
    </location>
</feature>
<feature type="strand" evidence="22">
    <location>
        <begin position="549"/>
        <end position="552"/>
    </location>
</feature>
<feature type="strand" evidence="22">
    <location>
        <begin position="554"/>
        <end position="561"/>
    </location>
</feature>
<feature type="helix" evidence="22">
    <location>
        <begin position="562"/>
        <end position="565"/>
    </location>
</feature>
<feature type="strand" evidence="22">
    <location>
        <begin position="571"/>
        <end position="577"/>
    </location>
</feature>
<feature type="strand" evidence="22">
    <location>
        <begin position="581"/>
        <end position="589"/>
    </location>
</feature>
<feature type="strand" evidence="22">
    <location>
        <begin position="597"/>
        <end position="603"/>
    </location>
</feature>
<feature type="turn" evidence="22">
    <location>
        <begin position="604"/>
        <end position="607"/>
    </location>
</feature>
<feature type="strand" evidence="22">
    <location>
        <begin position="608"/>
        <end position="613"/>
    </location>
</feature>
<feature type="turn" evidence="22">
    <location>
        <begin position="614"/>
        <end position="616"/>
    </location>
</feature>
<feature type="strand" evidence="22">
    <location>
        <begin position="619"/>
        <end position="623"/>
    </location>
</feature>
<feature type="strand" evidence="22">
    <location>
        <begin position="625"/>
        <end position="627"/>
    </location>
</feature>
<feature type="strand" evidence="22">
    <location>
        <begin position="633"/>
        <end position="635"/>
    </location>
</feature>
<feature type="helix" evidence="22">
    <location>
        <begin position="641"/>
        <end position="645"/>
    </location>
</feature>
<feature type="strand" evidence="22">
    <location>
        <begin position="647"/>
        <end position="653"/>
    </location>
</feature>
<feature type="strand" evidence="22">
    <location>
        <begin position="660"/>
        <end position="666"/>
    </location>
</feature>
<feature type="strand" evidence="22">
    <location>
        <begin position="677"/>
        <end position="679"/>
    </location>
</feature>
<feature type="strand" evidence="22">
    <location>
        <begin position="691"/>
        <end position="700"/>
    </location>
</feature>
<feature type="turn" evidence="22">
    <location>
        <begin position="701"/>
        <end position="703"/>
    </location>
</feature>
<feature type="strand" evidence="22">
    <location>
        <begin position="704"/>
        <end position="712"/>
    </location>
</feature>
<feature type="strand" evidence="22">
    <location>
        <begin position="717"/>
        <end position="724"/>
    </location>
</feature>
<feature type="strand" evidence="22">
    <location>
        <begin position="727"/>
        <end position="732"/>
    </location>
</feature>
<feature type="helix" evidence="22">
    <location>
        <begin position="734"/>
        <end position="737"/>
    </location>
</feature>
<feature type="turn" evidence="22">
    <location>
        <begin position="738"/>
        <end position="740"/>
    </location>
</feature>
<feature type="strand" evidence="22">
    <location>
        <begin position="754"/>
        <end position="758"/>
    </location>
</feature>
<feature type="helix" evidence="22">
    <location>
        <begin position="760"/>
        <end position="762"/>
    </location>
</feature>
<feature type="helix" evidence="22">
    <location>
        <begin position="770"/>
        <end position="785"/>
    </location>
</feature>
<feature type="helix" evidence="22">
    <location>
        <begin position="788"/>
        <end position="794"/>
    </location>
</feature>
<feature type="turn" evidence="22">
    <location>
        <begin position="795"/>
        <end position="797"/>
    </location>
</feature>
<feature type="helix" evidence="22">
    <location>
        <begin position="801"/>
        <end position="814"/>
    </location>
</feature>
<feature type="helix" evidence="22">
    <location>
        <begin position="817"/>
        <end position="826"/>
    </location>
</feature>
<feature type="helix" evidence="22">
    <location>
        <begin position="830"/>
        <end position="839"/>
    </location>
</feature>
<feature type="helix" evidence="22">
    <location>
        <begin position="845"/>
        <end position="855"/>
    </location>
</feature>
<feature type="helix" evidence="22">
    <location>
        <begin position="859"/>
        <end position="868"/>
    </location>
</feature>
<feature type="helix" evidence="22">
    <location>
        <begin position="872"/>
        <end position="882"/>
    </location>
</feature>
<feature type="helix" evidence="22">
    <location>
        <begin position="885"/>
        <end position="894"/>
    </location>
</feature>
<feature type="helix" evidence="22">
    <location>
        <begin position="897"/>
        <end position="899"/>
    </location>
</feature>
<feature type="helix" evidence="22">
    <location>
        <begin position="900"/>
        <end position="913"/>
    </location>
</feature>
<feature type="helix" evidence="22">
    <location>
        <begin position="917"/>
        <end position="926"/>
    </location>
</feature>
<feature type="helix" evidence="22">
    <location>
        <begin position="930"/>
        <end position="937"/>
    </location>
</feature>
<feature type="helix" evidence="22">
    <location>
        <begin position="942"/>
        <end position="952"/>
    </location>
</feature>
<feature type="helix" evidence="22">
    <location>
        <begin position="955"/>
        <end position="967"/>
    </location>
</feature>
<feature type="helix" evidence="22">
    <location>
        <begin position="971"/>
        <end position="980"/>
    </location>
</feature>
<feature type="helix" evidence="22">
    <location>
        <begin position="984"/>
        <end position="993"/>
    </location>
</feature>
<feature type="helix" evidence="22">
    <location>
        <begin position="997"/>
        <end position="1007"/>
    </location>
</feature>
<feature type="helix" evidence="22">
    <location>
        <begin position="1010"/>
        <end position="1022"/>
    </location>
</feature>
<feature type="helix" evidence="22">
    <location>
        <begin position="1026"/>
        <end position="1035"/>
    </location>
</feature>
<feature type="helix" evidence="22">
    <location>
        <begin position="1039"/>
        <end position="1049"/>
    </location>
</feature>
<feature type="helix" evidence="22">
    <location>
        <begin position="1052"/>
        <end position="1061"/>
    </location>
</feature>
<feature type="helix" evidence="22">
    <location>
        <begin position="1064"/>
        <end position="1077"/>
    </location>
</feature>
<feature type="helix" evidence="22">
    <location>
        <begin position="1081"/>
        <end position="1090"/>
    </location>
</feature>
<feature type="helix" evidence="22">
    <location>
        <begin position="1094"/>
        <end position="1103"/>
    </location>
</feature>
<feature type="helix" evidence="22">
    <location>
        <begin position="1107"/>
        <end position="1116"/>
    </location>
</feature>
<feature type="helix" evidence="22">
    <location>
        <begin position="1123"/>
        <end position="1135"/>
    </location>
</feature>
<feature type="helix" evidence="22">
    <location>
        <begin position="1139"/>
        <end position="1148"/>
    </location>
</feature>
<feature type="helix" evidence="22">
    <location>
        <begin position="1152"/>
        <end position="1161"/>
    </location>
</feature>
<feature type="helix" evidence="22">
    <location>
        <begin position="1168"/>
        <end position="1173"/>
    </location>
</feature>
<feature type="strand" evidence="22">
    <location>
        <begin position="1181"/>
        <end position="1183"/>
    </location>
</feature>
<feature type="helix" evidence="22">
    <location>
        <begin position="1185"/>
        <end position="1201"/>
    </location>
</feature>
<feature type="helix" evidence="22">
    <location>
        <begin position="1205"/>
        <end position="1214"/>
    </location>
</feature>
<feature type="helix" evidence="22">
    <location>
        <begin position="1219"/>
        <end position="1228"/>
    </location>
</feature>
<feature type="helix" evidence="22">
    <location>
        <begin position="1231"/>
        <end position="1241"/>
    </location>
</feature>
<feature type="helix" evidence="22">
    <location>
        <begin position="1244"/>
        <end position="1254"/>
    </location>
</feature>
<feature type="helix" evidence="22">
    <location>
        <begin position="1259"/>
        <end position="1261"/>
    </location>
</feature>
<feature type="helix" evidence="22">
    <location>
        <begin position="1263"/>
        <end position="1275"/>
    </location>
</feature>
<feature type="helix" evidence="22">
    <location>
        <begin position="1279"/>
        <end position="1295"/>
    </location>
</feature>
<feature type="helix" evidence="22">
    <location>
        <begin position="1300"/>
        <end position="1316"/>
    </location>
</feature>
<feature type="helix" evidence="22">
    <location>
        <begin position="1322"/>
        <end position="1348"/>
    </location>
</feature>
<feature type="turn" evidence="22">
    <location>
        <begin position="1349"/>
        <end position="1351"/>
    </location>
</feature>
<feature type="helix" evidence="22">
    <location>
        <begin position="1353"/>
        <end position="1364"/>
    </location>
</feature>
<feature type="helix" evidence="22">
    <location>
        <begin position="1369"/>
        <end position="1371"/>
    </location>
</feature>
<feature type="helix" evidence="22">
    <location>
        <begin position="1375"/>
        <end position="1388"/>
    </location>
</feature>
<feature type="helix" evidence="22">
    <location>
        <begin position="1392"/>
        <end position="1405"/>
    </location>
</feature>
<feature type="strand" evidence="22">
    <location>
        <begin position="1407"/>
        <end position="1409"/>
    </location>
</feature>
<feature type="helix" evidence="22">
    <location>
        <begin position="1411"/>
        <end position="1414"/>
    </location>
</feature>
<feature type="helix" evidence="22">
    <location>
        <begin position="1417"/>
        <end position="1424"/>
    </location>
</feature>
<proteinExistence type="evidence at protein level"/>
<reference key="1">
    <citation type="journal article" date="1998" name="DNA Res.">
        <title>Prediction of the coding sequences of unidentified human genes. IX. The complete sequences of 100 new cDNA clones from brain which can code for large proteins in vitro.</title>
        <authorList>
            <person name="Nagase T."/>
            <person name="Ishikawa K."/>
            <person name="Miyajima N."/>
            <person name="Tanaka A."/>
            <person name="Kotani H."/>
            <person name="Nomura N."/>
            <person name="Ohara O."/>
        </authorList>
    </citation>
    <scope>NUCLEOTIDE SEQUENCE [LARGE SCALE MRNA] (ISOFORM 1)</scope>
    <scope>VARIANT VAL-1070</scope>
    <source>
        <tissue>Brain</tissue>
    </source>
</reference>
<reference key="2">
    <citation type="journal article" date="2001" name="Hum. Mol. Genet.">
        <title>Sequence, structure and pathology of the fully annotated terminal 2 Mb of the short arm of human chromosome 16.</title>
        <authorList>
            <person name="Daniels R.J."/>
            <person name="Peden J.F."/>
            <person name="Lloyd C."/>
            <person name="Horsley S.W."/>
            <person name="Clark K."/>
            <person name="Tufarelli C."/>
            <person name="Kearney L."/>
            <person name="Buckle V.J."/>
            <person name="Doggett N.A."/>
            <person name="Flint J."/>
            <person name="Higgs D.R."/>
        </authorList>
    </citation>
    <scope>NUCLEOTIDE SEQUENCE [LARGE SCALE GENOMIC DNA]</scope>
</reference>
<reference key="3">
    <citation type="journal article" date="2007" name="BMC Genomics">
        <title>The full-ORF clone resource of the German cDNA consortium.</title>
        <authorList>
            <person name="Bechtel S."/>
            <person name="Rosenfelder H."/>
            <person name="Duda A."/>
            <person name="Schmidt C.P."/>
            <person name="Ernst U."/>
            <person name="Wellenreuther R."/>
            <person name="Mehrle A."/>
            <person name="Schuster C."/>
            <person name="Bahr A."/>
            <person name="Bloecker H."/>
            <person name="Heubner D."/>
            <person name="Hoerlein A."/>
            <person name="Michel G."/>
            <person name="Wedler H."/>
            <person name="Koehrer K."/>
            <person name="Ottenwaelder B."/>
            <person name="Poustka A."/>
            <person name="Wiemann S."/>
            <person name="Schupp I."/>
        </authorList>
    </citation>
    <scope>NUCLEOTIDE SEQUENCE [LARGE SCALE MRNA] (ISOFORM 2)</scope>
    <source>
        <tissue>Brain</tissue>
    </source>
</reference>
<reference key="4">
    <citation type="journal article" date="2004" name="Nature">
        <title>The sequence and analysis of duplication-rich human chromosome 16.</title>
        <authorList>
            <person name="Martin J."/>
            <person name="Han C."/>
            <person name="Gordon L.A."/>
            <person name="Terry A."/>
            <person name="Prabhakar S."/>
            <person name="She X."/>
            <person name="Xie G."/>
            <person name="Hellsten U."/>
            <person name="Chan Y.M."/>
            <person name="Altherr M."/>
            <person name="Couronne O."/>
            <person name="Aerts A."/>
            <person name="Bajorek E."/>
            <person name="Black S."/>
            <person name="Blumer H."/>
            <person name="Branscomb E."/>
            <person name="Brown N.C."/>
            <person name="Bruno W.J."/>
            <person name="Buckingham J.M."/>
            <person name="Callen D.F."/>
            <person name="Campbell C.S."/>
            <person name="Campbell M.L."/>
            <person name="Campbell E.W."/>
            <person name="Caoile C."/>
            <person name="Challacombe J.F."/>
            <person name="Chasteen L.A."/>
            <person name="Chertkov O."/>
            <person name="Chi H.C."/>
            <person name="Christensen M."/>
            <person name="Clark L.M."/>
            <person name="Cohn J.D."/>
            <person name="Denys M."/>
            <person name="Detter J.C."/>
            <person name="Dickson M."/>
            <person name="Dimitrijevic-Bussod M."/>
            <person name="Escobar J."/>
            <person name="Fawcett J.J."/>
            <person name="Flowers D."/>
            <person name="Fotopulos D."/>
            <person name="Glavina T."/>
            <person name="Gomez M."/>
            <person name="Gonzales E."/>
            <person name="Goodstein D."/>
            <person name="Goodwin L.A."/>
            <person name="Grady D.L."/>
            <person name="Grigoriev I."/>
            <person name="Groza M."/>
            <person name="Hammon N."/>
            <person name="Hawkins T."/>
            <person name="Haydu L."/>
            <person name="Hildebrand C.E."/>
            <person name="Huang W."/>
            <person name="Israni S."/>
            <person name="Jett J."/>
            <person name="Jewett P.B."/>
            <person name="Kadner K."/>
            <person name="Kimball H."/>
            <person name="Kobayashi A."/>
            <person name="Krawczyk M.-C."/>
            <person name="Leyba T."/>
            <person name="Longmire J.L."/>
            <person name="Lopez F."/>
            <person name="Lou Y."/>
            <person name="Lowry S."/>
            <person name="Ludeman T."/>
            <person name="Manohar C.F."/>
            <person name="Mark G.A."/>
            <person name="McMurray K.L."/>
            <person name="Meincke L.J."/>
            <person name="Morgan J."/>
            <person name="Moyzis R.K."/>
            <person name="Mundt M.O."/>
            <person name="Munk A.C."/>
            <person name="Nandkeshwar R.D."/>
            <person name="Pitluck S."/>
            <person name="Pollard M."/>
            <person name="Predki P."/>
            <person name="Parson-Quintana B."/>
            <person name="Ramirez L."/>
            <person name="Rash S."/>
            <person name="Retterer J."/>
            <person name="Ricke D.O."/>
            <person name="Robinson D.L."/>
            <person name="Rodriguez A."/>
            <person name="Salamov A."/>
            <person name="Saunders E.H."/>
            <person name="Scott D."/>
            <person name="Shough T."/>
            <person name="Stallings R.L."/>
            <person name="Stalvey M."/>
            <person name="Sutherland R.D."/>
            <person name="Tapia R."/>
            <person name="Tesmer J.G."/>
            <person name="Thayer N."/>
            <person name="Thompson L.S."/>
            <person name="Tice H."/>
            <person name="Torney D.C."/>
            <person name="Tran-Gyamfi M."/>
            <person name="Tsai M."/>
            <person name="Ulanovsky L.E."/>
            <person name="Ustaszewska A."/>
            <person name="Vo N."/>
            <person name="White P.S."/>
            <person name="Williams A.L."/>
            <person name="Wills P.L."/>
            <person name="Wu J.-R."/>
            <person name="Wu K."/>
            <person name="Yang J."/>
            <person name="DeJong P."/>
            <person name="Bruce D."/>
            <person name="Doggett N.A."/>
            <person name="Deaven L."/>
            <person name="Schmutz J."/>
            <person name="Grimwood J."/>
            <person name="Richardson P."/>
            <person name="Rokhsar D.S."/>
            <person name="Eichler E.E."/>
            <person name="Gilna P."/>
            <person name="Lucas S.M."/>
            <person name="Myers R.M."/>
            <person name="Rubin E.M."/>
            <person name="Pennacchio L.A."/>
        </authorList>
    </citation>
    <scope>NUCLEOTIDE SEQUENCE [LARGE SCALE GENOMIC DNA]</scope>
</reference>
<reference key="5">
    <citation type="submission" date="2005-09" db="EMBL/GenBank/DDBJ databases">
        <authorList>
            <person name="Mural R.J."/>
            <person name="Istrail S."/>
            <person name="Sutton G.G."/>
            <person name="Florea L."/>
            <person name="Halpern A.L."/>
            <person name="Mobarry C.M."/>
            <person name="Lippert R."/>
            <person name="Walenz B."/>
            <person name="Shatkay H."/>
            <person name="Dew I."/>
            <person name="Miller J.R."/>
            <person name="Flanigan M.J."/>
            <person name="Edwards N.J."/>
            <person name="Bolanos R."/>
            <person name="Fasulo D."/>
            <person name="Halldorsson B.V."/>
            <person name="Hannenhalli S."/>
            <person name="Turner R."/>
            <person name="Yooseph S."/>
            <person name="Lu F."/>
            <person name="Nusskern D.R."/>
            <person name="Shue B.C."/>
            <person name="Zheng X.H."/>
            <person name="Zhong F."/>
            <person name="Delcher A.L."/>
            <person name="Huson D.H."/>
            <person name="Kravitz S.A."/>
            <person name="Mouchard L."/>
            <person name="Reinert K."/>
            <person name="Remington K.A."/>
            <person name="Clark A.G."/>
            <person name="Waterman M.S."/>
            <person name="Eichler E.E."/>
            <person name="Adams M.D."/>
            <person name="Hunkapiller M.W."/>
            <person name="Myers E.W."/>
            <person name="Venter J.C."/>
        </authorList>
    </citation>
    <scope>NUCLEOTIDE SEQUENCE [LARGE SCALE GENOMIC DNA]</scope>
</reference>
<reference key="6">
    <citation type="journal article" date="2004" name="Genome Res.">
        <title>The status, quality, and expansion of the NIH full-length cDNA project: the Mammalian Gene Collection (MGC).</title>
        <authorList>
            <consortium name="The MGC Project Team"/>
        </authorList>
    </citation>
    <scope>NUCLEOTIDE SEQUENCE [LARGE SCALE MRNA] (ISOFORM 1)</scope>
    <source>
        <tissue>Lymph</tissue>
    </source>
</reference>
<reference key="7">
    <citation type="journal article" date="2009" name="Anal. Chem.">
        <title>Lys-N and trypsin cover complementary parts of the phosphoproteome in a refined SCX-based approach.</title>
        <authorList>
            <person name="Gauci S."/>
            <person name="Helbig A.O."/>
            <person name="Slijper M."/>
            <person name="Krijgsveld J."/>
            <person name="Heck A.J."/>
            <person name="Mohammed S."/>
        </authorList>
    </citation>
    <scope>IDENTIFICATION BY MASS SPECTROMETRY [LARGE SCALE ANALYSIS]</scope>
</reference>
<reference key="8">
    <citation type="journal article" date="2009" name="Sci. Signal.">
        <title>Quantitative phosphoproteomic analysis of T cell receptor signaling reveals system-wide modulation of protein-protein interactions.</title>
        <authorList>
            <person name="Mayya V."/>
            <person name="Lundgren D.H."/>
            <person name="Hwang S.-I."/>
            <person name="Rezaul K."/>
            <person name="Wu L."/>
            <person name="Eng J.K."/>
            <person name="Rodionov V."/>
            <person name="Han D.K."/>
        </authorList>
    </citation>
    <scope>PHOSPHORYLATION [LARGE SCALE ANALYSIS] AT SER-1443</scope>
    <scope>IDENTIFICATION BY MASS SPECTROMETRY [LARGE SCALE ANALYSIS]</scope>
    <source>
        <tissue>Leukemic T-cell</tissue>
    </source>
</reference>
<reference key="9">
    <citation type="journal article" date="2010" name="Genes Dev.">
        <title>TULP3 bridges the IFT-A complex and membrane phosphoinositides to promote trafficking of G protein-coupled receptors into primary cilia.</title>
        <authorList>
            <person name="Mukhopadhyay S."/>
            <person name="Wen X."/>
            <person name="Chih B."/>
            <person name="Nelson C.D."/>
            <person name="Lane W.S."/>
            <person name="Scales S.J."/>
            <person name="Jackson P.K."/>
        </authorList>
    </citation>
    <scope>FUNCTION</scope>
    <scope>IDENTIFICATION IN THE IFT-A COMPLEX</scope>
</reference>
<reference key="10">
    <citation type="journal article" date="2012" name="Am. J. Hum. Genet.">
        <title>Mainzer-Saldino syndrome is a ciliopathy caused by IFT140 mutations.</title>
        <authorList>
            <person name="Perrault I."/>
            <person name="Saunier S."/>
            <person name="Hanein S."/>
            <person name="Filhol E."/>
            <person name="Bizet A.A."/>
            <person name="Collins F."/>
            <person name="Salih M.A."/>
            <person name="Gerber S."/>
            <person name="Delphin N."/>
            <person name="Bigot K."/>
            <person name="Orssaud C."/>
            <person name="Silva E."/>
            <person name="Baudouin V."/>
            <person name="Oud M.M."/>
            <person name="Shannon N."/>
            <person name="Le Merrer M."/>
            <person name="Roche O."/>
            <person name="Pietrement C."/>
            <person name="Goumid J."/>
            <person name="Baumann C."/>
            <person name="Bole-Feysot C."/>
            <person name="Nitschke P."/>
            <person name="Zahrate M."/>
            <person name="Beales P."/>
            <person name="Arts H.H."/>
            <person name="Munnich A."/>
            <person name="Kaplan J."/>
            <person name="Antignac C."/>
            <person name="Cormier-Daire V."/>
            <person name="Rozet J.M."/>
        </authorList>
    </citation>
    <scope>FUNCTION</scope>
    <scope>SUBCELLULAR LOCATION</scope>
    <scope>VARIANTS SRTD9 ARG-212; MET-233; MET-292; CYS-311; GLU-522; GLN-576 AND LYS-664</scope>
    <scope>CHARACTERIZATION OF VARIANTS SRTD9 ARG-212; CYS-311 AND LYS-664</scope>
</reference>
<reference key="11">
    <citation type="journal article" date="2013" name="Hum. Mutat.">
        <title>Combined NGS approaches identify mutations in the intraflagellar transport gene IFT140 in skeletal ciliopathies with early progressive kidney Disease.</title>
        <authorList>
            <person name="Schmidts M."/>
            <person name="Frank V."/>
            <person name="Eisenberger T."/>
            <person name="Al Turki S."/>
            <person name="Bizet A.A."/>
            <person name="Antony D."/>
            <person name="Rix S."/>
            <person name="Decker C."/>
            <person name="Bachmann N."/>
            <person name="Bald M."/>
            <person name="Vinke T."/>
            <person name="Toenshoff B."/>
            <person name="Di Donato N."/>
            <person name="Neuhann T."/>
            <person name="Hartley J.L."/>
            <person name="Maher E.R."/>
            <person name="Bogdanovic R."/>
            <person name="Peco-Antic A."/>
            <person name="Mache C."/>
            <person name="Hurles M.E."/>
            <person name="Joksic I."/>
            <person name="Guc-Scekic M."/>
            <person name="Dobricic J."/>
            <person name="Brankovic-Magic M."/>
            <person name="Bolz H.J."/>
            <person name="Pazour G.J."/>
            <person name="Beales P.L."/>
            <person name="Scambler P.J."/>
            <person name="Saunier S."/>
            <person name="Mitchison H.M."/>
            <person name="Bergmann C."/>
        </authorList>
    </citation>
    <scope>SUBCELLULAR LOCATION</scope>
    <scope>VARIANTS HIS-110; THR-161; GLY-243; SER-459; HIS-514; GLY-787 AND ARG-1353</scope>
    <scope>VARIANTS SRTD9 PHE-152; GLY-267; MET-292; GLU-522 AND ARG-1360</scope>
    <scope>CHARACTERIZATION OF VARIANT SRTD9 MET-292</scope>
</reference>
<reference key="12">
    <citation type="journal article" date="2013" name="J. Proteome Res.">
        <title>Toward a comprehensive characterization of a human cancer cell phosphoproteome.</title>
        <authorList>
            <person name="Zhou H."/>
            <person name="Di Palma S."/>
            <person name="Preisinger C."/>
            <person name="Peng M."/>
            <person name="Polat A.N."/>
            <person name="Heck A.J."/>
            <person name="Mohammed S."/>
        </authorList>
    </citation>
    <scope>PHOSPHORYLATION [LARGE SCALE ANALYSIS] AT SER-360</scope>
    <scope>IDENTIFICATION BY MASS SPECTROMETRY [LARGE SCALE ANALYSIS]</scope>
    <source>
        <tissue>Erythroleukemia</tissue>
    </source>
</reference>
<reference key="13">
    <citation type="journal article" date="2015" name="PLoS ONE">
        <title>Characterization of tetratricopeptide repeat-containing proteins critical for cilia formation and function.</title>
        <authorList>
            <person name="Xu Y."/>
            <person name="Cao J."/>
            <person name="Huang S."/>
            <person name="Feng D."/>
            <person name="Zhang W."/>
            <person name="Zhu X."/>
            <person name="Yan X."/>
        </authorList>
    </citation>
    <scope>INTERACTION WITH TTC25</scope>
</reference>
<reference key="14">
    <citation type="journal article" date="2017" name="Mol. Biol. Cell">
        <title>Intraflagellar transport-A complex mediates ciliary entry and retrograde trafficking of ciliary G protein-coupled receptors.</title>
        <authorList>
            <person name="Hirano T."/>
            <person name="Katoh Y."/>
            <person name="Nakayama K."/>
        </authorList>
    </citation>
    <scope>IDENTIFICATION IN THE IFT-A COMPLEX</scope>
    <scope>SUBCELLULAR LOCATION</scope>
</reference>
<reference key="15">
    <citation type="journal article" date="2018" name="Hum. Mol. Genet.">
        <title>Ciliopathy-associated mutations of IFT122 impair ciliary protein trafficking but not ciliogenesis.</title>
        <authorList>
            <person name="Takahara M."/>
            <person name="Katoh Y."/>
            <person name="Nakamura K."/>
            <person name="Hirano T."/>
            <person name="Sugawa M."/>
            <person name="Tsurumi Y."/>
            <person name="Nakayama K."/>
        </authorList>
    </citation>
    <scope>IDENTIFICATION IN THE IFT-A COMPLEX</scope>
</reference>
<reference key="16">
    <citation type="journal article" date="2015" name="Hum. Genet.">
        <title>Mutations in human IFT140 cause non-syndromic retinal degeneration.</title>
        <authorList>
            <person name="Xu M."/>
            <person name="Yang L."/>
            <person name="Wang F."/>
            <person name="Li H."/>
            <person name="Wang X."/>
            <person name="Wang W."/>
            <person name="Ge Z."/>
            <person name="Wang K."/>
            <person name="Zhao L."/>
            <person name="Li H."/>
            <person name="Li Y."/>
            <person name="Sui R."/>
            <person name="Chen R."/>
        </authorList>
    </citation>
    <scope>INVOLVEMENT IN RP80</scope>
    <scope>VARIANTS RP80 LEU-71; ARG-329; PRO-418; 459-TRP--PRO-1462 DEL; MET-484; TRP-663; LYS-790; CYS-871; VAL-974; ARG-1276 AND PRO-1399</scope>
</reference>
<reference key="17">
    <citation type="journal article" date="2019" name="Am. J. Hum. Genet.">
        <title>Bi-allelic mutations in TTC21A induce asthenoteratospermia in humans and mice.</title>
        <authorList>
            <person name="Liu W."/>
            <person name="He X."/>
            <person name="Yang S."/>
            <person name="Zouari R."/>
            <person name="Wang J."/>
            <person name="Wu H."/>
            <person name="Kherraf Z.E."/>
            <person name="Liu C."/>
            <person name="Coutton C."/>
            <person name="Zhao R."/>
            <person name="Tang D."/>
            <person name="Tang S."/>
            <person name="Lv M."/>
            <person name="Fang Y."/>
            <person name="Li W."/>
            <person name="Li H."/>
            <person name="Zhao J."/>
            <person name="Wang X."/>
            <person name="Zhao S."/>
            <person name="Zhang J."/>
            <person name="Arnoult C."/>
            <person name="Jin L."/>
            <person name="Zhang Z."/>
            <person name="Ray P.F."/>
            <person name="Cao Y."/>
            <person name="Zhang F."/>
        </authorList>
    </citation>
    <scope>INTERACTION WITH TTC21A</scope>
</reference>
<reference key="18">
    <citation type="journal article" date="2013" name="PLoS Genet.">
        <title>Cauli: a mouse strain with an Ift140 mutation that results in a skeletal ciliopathy modelling Jeune syndrome.</title>
        <authorList>
            <person name="Miller K.A."/>
            <person name="Ah-Cann C.J."/>
            <person name="Welfare M.F."/>
            <person name="Tan T.Y."/>
            <person name="Pope K."/>
            <person name="Caruana G."/>
            <person name="Freckmann M.L."/>
            <person name="Savarirayan R."/>
            <person name="Bertram J.F."/>
            <person name="Dobbie M.S."/>
            <person name="Bateman J.F."/>
            <person name="Farlie P.G."/>
        </authorList>
    </citation>
    <scope>VARIANT SRTD9 TRP-280</scope>
</reference>
<reference key="19">
    <citation type="journal article" date="2016" name="Br. J. Ophthalmol.">
        <title>The ophthalmic phenotype of IFT140-related ciliopathy ranges from isolated to syndromic congenital retinal dystrophy.</title>
        <authorList>
            <person name="Bifari I.N."/>
            <person name="Elkhamary S.M."/>
            <person name="Bolz H.J."/>
            <person name="Khan A.O."/>
        </authorList>
    </citation>
    <scope>VARIANT RP80 LYS-664</scope>
</reference>
<reference key="20">
    <citation type="journal article" date="2016" name="Invest. Ophthalmol. Vis. Sci.">
        <title>Nonsyndromic Retinal Dystrophy due to Bi-Allelic Mutations in the Ciliary Transport Gene IFT140.</title>
        <authorList>
            <person name="Hull S."/>
            <person name="Owen N."/>
            <person name="Islam F."/>
            <person name="Tracey-White D."/>
            <person name="Plagnol V."/>
            <person name="Holder G.E."/>
            <person name="Michaelides M."/>
            <person name="Carss K."/>
            <person name="Raymond F.L."/>
            <person name="Rozet J.M."/>
            <person name="Ramsden S.C."/>
            <person name="Black G.C."/>
            <person name="Perrault I."/>
            <person name="Sarkar A."/>
            <person name="Moosajee M."/>
            <person name="Webster A.R."/>
            <person name="Arno G."/>
            <person name="Moore A.T."/>
        </authorList>
    </citation>
    <scope>VARIANTS RP80 TYR-333; THR-341; PRO-440; MET-484 AND PRO-939</scope>
    <scope>VARIANT ARG-777</scope>
    <scope>CHARACTERIZATION RP80 PRO-440; MET-484; LYS-664 AND PRO-939</scope>
    <scope>CHARACTERIZATION OF VARIANT ARG-777</scope>
    <scope>SUBCELLULAR LOCATION</scope>
</reference>
<reference key="21">
    <citation type="journal article" date="2017" name="Clin. Dysmorphol.">
        <title>The evolving craniofacial phenotype of a patient with Sensenbrenner syndrome caused by IFT140 compound heterozygous mutations.</title>
        <authorList>
            <consortium name="DDD Study"/>
            <person name="Bayat A."/>
            <person name="Kerr B."/>
            <person name="Douzgou S."/>
        </authorList>
    </citation>
    <scope>VARIANTS SRTD9 ARG-212 AND 760-ARG--PRO-1462 DEL</scope>
</reference>
<reference key="22">
    <citation type="journal article" date="2017" name="Hum. Genomics">
        <title>Partial uniparental isodisomy of chromosome 16 unmasks a deleterious biallelic mutation in IFT140 that causes Mainzer-Saldino syndrome.</title>
        <authorList>
            <person name="Helm B.M."/>
            <person name="Willer J.R."/>
            <person name="Sadeghpour A."/>
            <person name="Golzio C."/>
            <person name="Crouch E."/>
            <person name="Vergano S.S."/>
            <person name="Katsanis N."/>
            <person name="Davis E.E."/>
        </authorList>
    </citation>
    <scope>VARIANT SRTD9 ARG-212</scope>
    <scope>CHARACTERIZATION OF VARIANT SRTD9 ARG-212</scope>
    <scope>FUNCTION</scope>
</reference>
<keyword id="KW-0002">3D-structure</keyword>
<keyword id="KW-0025">Alternative splicing</keyword>
<keyword id="KW-0966">Cell projection</keyword>
<keyword id="KW-1186">Ciliopathy</keyword>
<keyword id="KW-0969">Cilium</keyword>
<keyword id="KW-0970">Cilium biogenesis/degradation</keyword>
<keyword id="KW-0963">Cytoplasm</keyword>
<keyword id="KW-0206">Cytoskeleton</keyword>
<keyword id="KW-0225">Disease variant</keyword>
<keyword id="KW-0597">Phosphoprotein</keyword>
<keyword id="KW-1267">Proteomics identification</keyword>
<keyword id="KW-1185">Reference proteome</keyword>
<keyword id="KW-0677">Repeat</keyword>
<keyword id="KW-0682">Retinitis pigmentosa</keyword>
<keyword id="KW-0802">TPR repeat</keyword>
<keyword id="KW-0853">WD repeat</keyword>
<organism>
    <name type="scientific">Homo sapiens</name>
    <name type="common">Human</name>
    <dbReference type="NCBI Taxonomy" id="9606"/>
    <lineage>
        <taxon>Eukaryota</taxon>
        <taxon>Metazoa</taxon>
        <taxon>Chordata</taxon>
        <taxon>Craniata</taxon>
        <taxon>Vertebrata</taxon>
        <taxon>Euteleostomi</taxon>
        <taxon>Mammalia</taxon>
        <taxon>Eutheria</taxon>
        <taxon>Euarchontoglires</taxon>
        <taxon>Primates</taxon>
        <taxon>Haplorrhini</taxon>
        <taxon>Catarrhini</taxon>
        <taxon>Hominidae</taxon>
        <taxon>Homo</taxon>
    </lineage>
</organism>
<dbReference type="EMBL" id="AB011162">
    <property type="protein sequence ID" value="BAA25516.2"/>
    <property type="status" value="ALT_INIT"/>
    <property type="molecule type" value="mRNA"/>
</dbReference>
<dbReference type="EMBL" id="AE006467">
    <property type="protein sequence ID" value="AAK61285.1"/>
    <property type="molecule type" value="Genomic_DNA"/>
</dbReference>
<dbReference type="EMBL" id="AL080069">
    <property type="protein sequence ID" value="CAB45696.1"/>
    <property type="molecule type" value="mRNA"/>
</dbReference>
<dbReference type="EMBL" id="AL031705">
    <property type="status" value="NOT_ANNOTATED_CDS"/>
    <property type="molecule type" value="Genomic_DNA"/>
</dbReference>
<dbReference type="EMBL" id="Z97633">
    <property type="status" value="NOT_ANNOTATED_CDS"/>
    <property type="molecule type" value="Genomic_DNA"/>
</dbReference>
<dbReference type="EMBL" id="AL031719">
    <property type="status" value="NOT_ANNOTATED_CDS"/>
    <property type="molecule type" value="Genomic_DNA"/>
</dbReference>
<dbReference type="EMBL" id="Z97652">
    <property type="status" value="NOT_ANNOTATED_CDS"/>
    <property type="molecule type" value="Genomic_DNA"/>
</dbReference>
<dbReference type="EMBL" id="AL133297">
    <property type="status" value="NOT_ANNOTATED_CDS"/>
    <property type="molecule type" value="Genomic_DNA"/>
</dbReference>
<dbReference type="EMBL" id="CH471112">
    <property type="protein sequence ID" value="EAW85642.1"/>
    <property type="molecule type" value="Genomic_DNA"/>
</dbReference>
<dbReference type="EMBL" id="CH471112">
    <property type="protein sequence ID" value="EAW85644.1"/>
    <property type="molecule type" value="Genomic_DNA"/>
</dbReference>
<dbReference type="EMBL" id="BC035577">
    <property type="protein sequence ID" value="AAH35577.1"/>
    <property type="molecule type" value="mRNA"/>
</dbReference>
<dbReference type="CCDS" id="CCDS10439.1">
    <molecule id="Q96RY7-1"/>
</dbReference>
<dbReference type="PIR" id="T00345">
    <property type="entry name" value="T00345"/>
</dbReference>
<dbReference type="RefSeq" id="NP_055529.2">
    <molecule id="Q96RY7-1"/>
    <property type="nucleotide sequence ID" value="NM_014714.3"/>
</dbReference>
<dbReference type="RefSeq" id="XP_006721053.1">
    <molecule id="Q96RY7-1"/>
    <property type="nucleotide sequence ID" value="XM_006720990.4"/>
</dbReference>
<dbReference type="RefSeq" id="XP_006721054.1">
    <molecule id="Q96RY7-1"/>
    <property type="nucleotide sequence ID" value="XM_006720991.4"/>
</dbReference>
<dbReference type="RefSeq" id="XP_016879399.1">
    <property type="nucleotide sequence ID" value="XM_017023910.1"/>
</dbReference>
<dbReference type="RefSeq" id="XP_047290921.1">
    <molecule id="Q96RY7-1"/>
    <property type="nucleotide sequence ID" value="XM_047434965.1"/>
</dbReference>
<dbReference type="RefSeq" id="XP_047290922.1">
    <molecule id="Q96RY7-1"/>
    <property type="nucleotide sequence ID" value="XM_047434966.1"/>
</dbReference>
<dbReference type="RefSeq" id="XP_047290923.1">
    <molecule id="Q96RY7-1"/>
    <property type="nucleotide sequence ID" value="XM_047434967.1"/>
</dbReference>
<dbReference type="RefSeq" id="XP_047290924.1">
    <molecule id="Q96RY7-1"/>
    <property type="nucleotide sequence ID" value="XM_047434968.1"/>
</dbReference>
<dbReference type="RefSeq" id="XP_047290925.1">
    <molecule id="Q96RY7-1"/>
    <property type="nucleotide sequence ID" value="XM_047434969.1"/>
</dbReference>
<dbReference type="RefSeq" id="XP_054170486.1">
    <molecule id="Q96RY7-1"/>
    <property type="nucleotide sequence ID" value="XM_054314511.1"/>
</dbReference>
<dbReference type="RefSeq" id="XP_054170487.1">
    <molecule id="Q96RY7-1"/>
    <property type="nucleotide sequence ID" value="XM_054314512.1"/>
</dbReference>
<dbReference type="RefSeq" id="XP_054170488.1">
    <molecule id="Q96RY7-1"/>
    <property type="nucleotide sequence ID" value="XM_054314513.1"/>
</dbReference>
<dbReference type="RefSeq" id="XP_054170489.1">
    <molecule id="Q96RY7-1"/>
    <property type="nucleotide sequence ID" value="XM_054314514.1"/>
</dbReference>
<dbReference type="RefSeq" id="XP_054170490.1">
    <molecule id="Q96RY7-1"/>
    <property type="nucleotide sequence ID" value="XM_054314515.1"/>
</dbReference>
<dbReference type="RefSeq" id="XP_054170491.1">
    <molecule id="Q96RY7-1"/>
    <property type="nucleotide sequence ID" value="XM_054314516.1"/>
</dbReference>
<dbReference type="RefSeq" id="XP_054170492.1">
    <molecule id="Q96RY7-1"/>
    <property type="nucleotide sequence ID" value="XM_054314517.1"/>
</dbReference>
<dbReference type="PDB" id="8BBF">
    <property type="method" value="EM"/>
    <property type="resolution" value="8.00 A"/>
    <property type="chains" value="B=1-1462"/>
</dbReference>
<dbReference type="PDB" id="8BBG">
    <property type="method" value="EM"/>
    <property type="resolution" value="3.50 A"/>
    <property type="chains" value="B=1-1462"/>
</dbReference>
<dbReference type="PDB" id="8FGW">
    <property type="method" value="EM"/>
    <property type="resolution" value="3.70 A"/>
    <property type="chains" value="E=1-1462"/>
</dbReference>
<dbReference type="PDB" id="8FH3">
    <property type="method" value="EM"/>
    <property type="resolution" value="4.30 A"/>
    <property type="chains" value="E=1-1462"/>
</dbReference>
<dbReference type="PDBsum" id="8BBF"/>
<dbReference type="PDBsum" id="8BBG"/>
<dbReference type="PDBsum" id="8FGW"/>
<dbReference type="PDBsum" id="8FH3"/>
<dbReference type="EMDB" id="EMD-15955"/>
<dbReference type="EMDB" id="EMD-29073"/>
<dbReference type="EMDB" id="EMD-29078"/>
<dbReference type="SMR" id="Q96RY7"/>
<dbReference type="BioGRID" id="115090">
    <property type="interactions" value="77"/>
</dbReference>
<dbReference type="ComplexPortal" id="CPX-5021">
    <property type="entry name" value="Intraflagellar transport complex A"/>
</dbReference>
<dbReference type="CORUM" id="Q96RY7"/>
<dbReference type="FunCoup" id="Q96RY7">
    <property type="interactions" value="537"/>
</dbReference>
<dbReference type="IntAct" id="Q96RY7">
    <property type="interactions" value="53"/>
</dbReference>
<dbReference type="MINT" id="Q96RY7"/>
<dbReference type="STRING" id="9606.ENSP00000406012"/>
<dbReference type="iPTMnet" id="Q96RY7"/>
<dbReference type="PhosphoSitePlus" id="Q96RY7"/>
<dbReference type="BioMuta" id="IFT140"/>
<dbReference type="DMDM" id="74761083"/>
<dbReference type="jPOST" id="Q96RY7"/>
<dbReference type="MassIVE" id="Q96RY7"/>
<dbReference type="PaxDb" id="9606-ENSP00000406012"/>
<dbReference type="PeptideAtlas" id="Q96RY7"/>
<dbReference type="ProteomicsDB" id="78049">
    <molecule id="Q96RY7-1"/>
</dbReference>
<dbReference type="Pumba" id="Q96RY7"/>
<dbReference type="Antibodypedia" id="23147">
    <property type="antibodies" value="72 antibodies from 20 providers"/>
</dbReference>
<dbReference type="DNASU" id="9742"/>
<dbReference type="Ensembl" id="ENST00000361339.9">
    <molecule id="Q96RY7-2"/>
    <property type="protein sequence ID" value="ENSP00000354895.5"/>
    <property type="gene ID" value="ENSG00000187535.14"/>
</dbReference>
<dbReference type="Ensembl" id="ENST00000426508.7">
    <molecule id="Q96RY7-1"/>
    <property type="protein sequence ID" value="ENSP00000406012.2"/>
    <property type="gene ID" value="ENSG00000187535.14"/>
</dbReference>
<dbReference type="GeneID" id="9742"/>
<dbReference type="KEGG" id="hsa:9742"/>
<dbReference type="MANE-Select" id="ENST00000426508.7">
    <property type="protein sequence ID" value="ENSP00000406012.2"/>
    <property type="RefSeq nucleotide sequence ID" value="NM_014714.4"/>
    <property type="RefSeq protein sequence ID" value="NP_055529.2"/>
</dbReference>
<dbReference type="UCSC" id="uc002cmb.4">
    <molecule id="Q96RY7-1"/>
    <property type="organism name" value="human"/>
</dbReference>
<dbReference type="AGR" id="HGNC:29077"/>
<dbReference type="CTD" id="9742"/>
<dbReference type="DisGeNET" id="9742"/>
<dbReference type="GeneCards" id="IFT140"/>
<dbReference type="GeneReviews" id="IFT140"/>
<dbReference type="HGNC" id="HGNC:29077">
    <property type="gene designation" value="IFT140"/>
</dbReference>
<dbReference type="HPA" id="ENSG00000187535">
    <property type="expression patterns" value="Low tissue specificity"/>
</dbReference>
<dbReference type="MalaCards" id="IFT140"/>
<dbReference type="MIM" id="266920">
    <property type="type" value="phenotype"/>
</dbReference>
<dbReference type="MIM" id="614620">
    <property type="type" value="gene"/>
</dbReference>
<dbReference type="MIM" id="617781">
    <property type="type" value="phenotype"/>
</dbReference>
<dbReference type="neXtProt" id="NX_Q96RY7"/>
<dbReference type="OpenTargets" id="ENSG00000187535"/>
<dbReference type="Orphanet" id="730">
    <property type="disease" value="Autosomal dominant polycystic kidney disease"/>
</dbReference>
<dbReference type="Orphanet" id="474">
    <property type="disease" value="Jeune syndrome"/>
</dbReference>
<dbReference type="Orphanet" id="65">
    <property type="disease" value="Leber congenital amaurosis"/>
</dbReference>
<dbReference type="Orphanet" id="791">
    <property type="disease" value="Retinitis pigmentosa"/>
</dbReference>
<dbReference type="Orphanet" id="140969">
    <property type="disease" value="Saldino-Mainzer syndrome"/>
</dbReference>
<dbReference type="PharmGKB" id="PA142671665"/>
<dbReference type="VEuPathDB" id="HostDB:ENSG00000187535"/>
<dbReference type="eggNOG" id="KOG3617">
    <property type="taxonomic scope" value="Eukaryota"/>
</dbReference>
<dbReference type="GeneTree" id="ENSGT00940000153417"/>
<dbReference type="HOGENOM" id="CLU_001853_0_0_1"/>
<dbReference type="InParanoid" id="Q96RY7"/>
<dbReference type="OMA" id="YAQFMES"/>
<dbReference type="OrthoDB" id="10258787at2759"/>
<dbReference type="PAN-GO" id="Q96RY7">
    <property type="GO annotations" value="4 GO annotations based on evolutionary models"/>
</dbReference>
<dbReference type="PhylomeDB" id="Q96RY7"/>
<dbReference type="TreeFam" id="TF105851"/>
<dbReference type="PathwayCommons" id="Q96RY7"/>
<dbReference type="Reactome" id="R-HSA-5610787">
    <property type="pathway name" value="Hedgehog 'off' state"/>
</dbReference>
<dbReference type="Reactome" id="R-HSA-5620924">
    <property type="pathway name" value="Intraflagellar transport"/>
</dbReference>
<dbReference type="SignaLink" id="Q96RY7"/>
<dbReference type="BioGRID-ORCS" id="9742">
    <property type="hits" value="24 hits in 1154 CRISPR screens"/>
</dbReference>
<dbReference type="ChiTaRS" id="IFT140">
    <property type="organism name" value="human"/>
</dbReference>
<dbReference type="GenomeRNAi" id="9742"/>
<dbReference type="Pharos" id="Q96RY7">
    <property type="development level" value="Tbio"/>
</dbReference>
<dbReference type="PRO" id="PR:Q96RY7"/>
<dbReference type="Proteomes" id="UP000005640">
    <property type="component" value="Chromosome 16"/>
</dbReference>
<dbReference type="RNAct" id="Q96RY7">
    <property type="molecule type" value="protein"/>
</dbReference>
<dbReference type="Bgee" id="ENSG00000187535">
    <property type="expression patterns" value="Expressed in right uterine tube and 136 other cell types or tissues"/>
</dbReference>
<dbReference type="ExpressionAtlas" id="Q96RY7">
    <property type="expression patterns" value="baseline and differential"/>
</dbReference>
<dbReference type="GO" id="GO:0005930">
    <property type="term" value="C:axoneme"/>
    <property type="evidence" value="ECO:0000250"/>
    <property type="project" value="UniProtKB"/>
</dbReference>
<dbReference type="GO" id="GO:0005814">
    <property type="term" value="C:centriole"/>
    <property type="evidence" value="ECO:0007669"/>
    <property type="project" value="Ensembl"/>
</dbReference>
<dbReference type="GO" id="GO:0005813">
    <property type="term" value="C:centrosome"/>
    <property type="evidence" value="ECO:0000314"/>
    <property type="project" value="UniProtKB"/>
</dbReference>
<dbReference type="GO" id="GO:0036064">
    <property type="term" value="C:ciliary basal body"/>
    <property type="evidence" value="ECO:0000314"/>
    <property type="project" value="HPA"/>
</dbReference>
<dbReference type="GO" id="GO:0097542">
    <property type="term" value="C:ciliary tip"/>
    <property type="evidence" value="ECO:0000304"/>
    <property type="project" value="Reactome"/>
</dbReference>
<dbReference type="GO" id="GO:0005929">
    <property type="term" value="C:cilium"/>
    <property type="evidence" value="ECO:0000314"/>
    <property type="project" value="UniProtKB"/>
</dbReference>
<dbReference type="GO" id="GO:0120199">
    <property type="term" value="C:cone photoreceptor outer segment"/>
    <property type="evidence" value="ECO:0007669"/>
    <property type="project" value="Ensembl"/>
</dbReference>
<dbReference type="GO" id="GO:0030991">
    <property type="term" value="C:intraciliary transport particle A"/>
    <property type="evidence" value="ECO:0000314"/>
    <property type="project" value="UniProtKB"/>
</dbReference>
<dbReference type="GO" id="GO:0005739">
    <property type="term" value="C:mitochondrion"/>
    <property type="evidence" value="ECO:0000314"/>
    <property type="project" value="HPA"/>
</dbReference>
<dbReference type="GO" id="GO:0005654">
    <property type="term" value="C:nucleoplasm"/>
    <property type="evidence" value="ECO:0000314"/>
    <property type="project" value="HPA"/>
</dbReference>
<dbReference type="GO" id="GO:0032391">
    <property type="term" value="C:photoreceptor connecting cilium"/>
    <property type="evidence" value="ECO:0007669"/>
    <property type="project" value="Ensembl"/>
</dbReference>
<dbReference type="GO" id="GO:0060271">
    <property type="term" value="P:cilium assembly"/>
    <property type="evidence" value="ECO:0000315"/>
    <property type="project" value="UniProtKB"/>
</dbReference>
<dbReference type="GO" id="GO:0007368">
    <property type="term" value="P:determination of left/right symmetry"/>
    <property type="evidence" value="ECO:0007669"/>
    <property type="project" value="Ensembl"/>
</dbReference>
<dbReference type="GO" id="GO:1990403">
    <property type="term" value="P:embryonic brain development"/>
    <property type="evidence" value="ECO:0007669"/>
    <property type="project" value="Ensembl"/>
</dbReference>
<dbReference type="GO" id="GO:0031076">
    <property type="term" value="P:embryonic camera-type eye development"/>
    <property type="evidence" value="ECO:0007669"/>
    <property type="project" value="Ensembl"/>
</dbReference>
<dbReference type="GO" id="GO:0048701">
    <property type="term" value="P:embryonic cranial skeleton morphogenesis"/>
    <property type="evidence" value="ECO:0007669"/>
    <property type="project" value="Ensembl"/>
</dbReference>
<dbReference type="GO" id="GO:0042733">
    <property type="term" value="P:embryonic digit morphogenesis"/>
    <property type="evidence" value="ECO:0007669"/>
    <property type="project" value="Ensembl"/>
</dbReference>
<dbReference type="GO" id="GO:0007507">
    <property type="term" value="P:heart development"/>
    <property type="evidence" value="ECO:0007669"/>
    <property type="project" value="Ensembl"/>
</dbReference>
<dbReference type="GO" id="GO:0035721">
    <property type="term" value="P:intraciliary retrograde transport"/>
    <property type="evidence" value="ECO:0000315"/>
    <property type="project" value="UniProtKB"/>
</dbReference>
<dbReference type="GO" id="GO:0021532">
    <property type="term" value="P:neural tube patterning"/>
    <property type="evidence" value="ECO:0007669"/>
    <property type="project" value="Ensembl"/>
</dbReference>
<dbReference type="GO" id="GO:1905515">
    <property type="term" value="P:non-motile cilium assembly"/>
    <property type="evidence" value="ECO:0007669"/>
    <property type="project" value="Ensembl"/>
</dbReference>
<dbReference type="GO" id="GO:0035845">
    <property type="term" value="P:photoreceptor cell outer segment organization"/>
    <property type="evidence" value="ECO:0007669"/>
    <property type="project" value="Ensembl"/>
</dbReference>
<dbReference type="GO" id="GO:0061512">
    <property type="term" value="P:protein localization to cilium"/>
    <property type="evidence" value="ECO:0000315"/>
    <property type="project" value="UniProtKB"/>
</dbReference>
<dbReference type="GO" id="GO:1902017">
    <property type="term" value="P:regulation of cilium assembly"/>
    <property type="evidence" value="ECO:0000315"/>
    <property type="project" value="UniProtKB"/>
</dbReference>
<dbReference type="GO" id="GO:0008589">
    <property type="term" value="P:regulation of smoothened signaling pathway"/>
    <property type="evidence" value="ECO:0007669"/>
    <property type="project" value="Ensembl"/>
</dbReference>
<dbReference type="FunFam" id="2.130.10.10:FF:000675">
    <property type="entry name" value="Intraflagellar transport 140"/>
    <property type="match status" value="1"/>
</dbReference>
<dbReference type="FunFam" id="2.130.10.10:FF:000811">
    <property type="entry name" value="Intraflagellar transport 140"/>
    <property type="match status" value="1"/>
</dbReference>
<dbReference type="FunFam" id="1.25.40.470:FF:000010">
    <property type="entry name" value="Intraflagellar transport 140 homolog (Chlamydomonas)"/>
    <property type="match status" value="1"/>
</dbReference>
<dbReference type="FunFam" id="1.25.40.470:FF:000011">
    <property type="entry name" value="Intraflagellar transport protein 140"/>
    <property type="match status" value="1"/>
</dbReference>
<dbReference type="Gene3D" id="1.25.40.470">
    <property type="match status" value="2"/>
</dbReference>
<dbReference type="Gene3D" id="2.130.10.10">
    <property type="entry name" value="YVTN repeat-like/Quinoprotein amine dehydrogenase"/>
    <property type="match status" value="2"/>
</dbReference>
<dbReference type="InterPro" id="IPR056154">
    <property type="entry name" value="Beta-prop_IFT140_1st"/>
</dbReference>
<dbReference type="InterPro" id="IPR056155">
    <property type="entry name" value="Beta-prop_IFT140_2nd"/>
</dbReference>
<dbReference type="InterPro" id="IPR056168">
    <property type="entry name" value="TPR_IF140/IFT172/WDR19"/>
</dbReference>
<dbReference type="InterPro" id="IPR056156">
    <property type="entry name" value="TPR_IF140_C"/>
</dbReference>
<dbReference type="InterPro" id="IPR015943">
    <property type="entry name" value="WD40/YVTN_repeat-like_dom_sf"/>
</dbReference>
<dbReference type="InterPro" id="IPR036322">
    <property type="entry name" value="WD40_repeat_dom_sf"/>
</dbReference>
<dbReference type="InterPro" id="IPR001680">
    <property type="entry name" value="WD40_rpt"/>
</dbReference>
<dbReference type="PANTHER" id="PTHR15722">
    <property type="entry name" value="IFT140/172-RELATED"/>
    <property type="match status" value="1"/>
</dbReference>
<dbReference type="PANTHER" id="PTHR15722:SF7">
    <property type="entry name" value="INTRAFLAGELLAR TRANSPORT PROTEIN 140 HOMOLOG"/>
    <property type="match status" value="1"/>
</dbReference>
<dbReference type="Pfam" id="PF23383">
    <property type="entry name" value="Beta-prop_IFT140_1st"/>
    <property type="match status" value="1"/>
</dbReference>
<dbReference type="Pfam" id="PF23385">
    <property type="entry name" value="Beta-prop_IFT140_2nd"/>
    <property type="match status" value="1"/>
</dbReference>
<dbReference type="Pfam" id="PF24762">
    <property type="entry name" value="TPR_IF140-IFT172"/>
    <property type="match status" value="1"/>
</dbReference>
<dbReference type="Pfam" id="PF24760">
    <property type="entry name" value="TPR_IF140_C"/>
    <property type="match status" value="1"/>
</dbReference>
<dbReference type="SMART" id="SM00320">
    <property type="entry name" value="WD40"/>
    <property type="match status" value="3"/>
</dbReference>
<dbReference type="SUPFAM" id="SSF50978">
    <property type="entry name" value="WD40 repeat-like"/>
    <property type="match status" value="2"/>
</dbReference>
<dbReference type="PROSITE" id="PS50082">
    <property type="entry name" value="WD_REPEATS_2"/>
    <property type="match status" value="1"/>
</dbReference>
<dbReference type="PROSITE" id="PS50294">
    <property type="entry name" value="WD_REPEATS_REGION"/>
    <property type="match status" value="1"/>
</dbReference>
<evidence type="ECO:0000250" key="1">
    <source>
        <dbReference type="UniProtKB" id="E9PY46"/>
    </source>
</evidence>
<evidence type="ECO:0000256" key="2">
    <source>
        <dbReference type="SAM" id="MobiDB-lite"/>
    </source>
</evidence>
<evidence type="ECO:0000269" key="3">
    <source>
    </source>
</evidence>
<evidence type="ECO:0000269" key="4">
    <source>
    </source>
</evidence>
<evidence type="ECO:0000269" key="5">
    <source>
    </source>
</evidence>
<evidence type="ECO:0000269" key="6">
    <source>
    </source>
</evidence>
<evidence type="ECO:0000269" key="7">
    <source>
    </source>
</evidence>
<evidence type="ECO:0000269" key="8">
    <source>
    </source>
</evidence>
<evidence type="ECO:0000269" key="9">
    <source>
    </source>
</evidence>
<evidence type="ECO:0000269" key="10">
    <source>
    </source>
</evidence>
<evidence type="ECO:0000269" key="11">
    <source>
    </source>
</evidence>
<evidence type="ECO:0000269" key="12">
    <source>
    </source>
</evidence>
<evidence type="ECO:0000269" key="13">
    <source>
    </source>
</evidence>
<evidence type="ECO:0000269" key="14">
    <source>
    </source>
</evidence>
<evidence type="ECO:0000269" key="15">
    <source>
    </source>
</evidence>
<evidence type="ECO:0000269" key="16">
    <source>
    </source>
</evidence>
<evidence type="ECO:0000303" key="17">
    <source>
    </source>
</evidence>
<evidence type="ECO:0000305" key="18"/>
<evidence type="ECO:0000312" key="19">
    <source>
        <dbReference type="HGNC" id="HGNC:29077"/>
    </source>
</evidence>
<evidence type="ECO:0007744" key="20">
    <source>
    </source>
</evidence>
<evidence type="ECO:0007744" key="21">
    <source>
    </source>
</evidence>
<evidence type="ECO:0007829" key="22">
    <source>
        <dbReference type="PDB" id="8BBG"/>
    </source>
</evidence>
<accession>Q96RY7</accession>
<accession>A2A2A8</accession>
<accession>D3DU75</accession>
<accession>O60332</accession>
<accession>Q9UG52</accession>
<comment type="function">
    <text evidence="1 3 4 13">Component of the IFT complex A (IFT-A), a complex required for retrograde ciliary transport and entry into cilia of G protein-coupled receptors (GPCRs) (PubMed:20889716, PubMed:22503633). Plays a pivotal role in proper development and function of ciliated cells through its role in ciliogenesis and/or cilium maintenance (PubMed:22503633). Required for the development and maintenance of the outer segments of rod and cone photoreceptor cells. Plays a role in maintenance and the delivery of opsin to the outer segment of photoreceptor cells (By similarity).</text>
</comment>
<comment type="subunit">
    <text evidence="3 7 11 14 15">Component of the IFT complex A (IFT-A) (PubMed:20889716). IFT-A complex is divided into a core subcomplex composed of IFT122:IFT140:WDR19 which is associated with TULP3 and a peripheral subcomplex composed of IFT43:WDR35:TTC21B (PubMed:27932497, PubMed:29220510). Interacts (via C-terminal region) with IFT122 (via C-terminal region) (PubMed:29220510). Interacts with TTC25 (PubMed:25860617). Interacts with TTC21A (PubMed:30929735).</text>
</comment>
<comment type="interaction">
    <interactant intactId="EBI-308494">
        <id>Q96RY7</id>
    </interactant>
    <interactant intactId="EBI-11903679">
        <id>Q8NEZ3</id>
        <label>WDR19</label>
    </interactant>
    <organismsDiffer>false</organismsDiffer>
    <experiments>8</experiments>
</comment>
<comment type="subcellular location">
    <subcellularLocation>
        <location evidence="4 10">Cytoplasm</location>
        <location evidence="4 10">Cytoskeleton</location>
        <location evidence="4 10">Cilium basal body</location>
    </subcellularLocation>
    <subcellularLocation>
        <location evidence="5">Cytoplasm</location>
        <location evidence="5">Cytoskeleton</location>
        <location evidence="5">Microtubule organizing center</location>
        <location evidence="5">Centrosome</location>
    </subcellularLocation>
    <subcellularLocation>
        <location evidence="4 10 11">Cell projection</location>
        <location evidence="4 10 11">Cilium</location>
    </subcellularLocation>
</comment>
<comment type="alternative products">
    <event type="alternative splicing"/>
    <isoform>
        <id>Q96RY7-1</id>
        <name>1</name>
        <sequence type="displayed"/>
    </isoform>
    <isoform>
        <id>Q96RY7-2</id>
        <name>2</name>
        <sequence type="described" ref="VSP_056392"/>
    </isoform>
</comment>
<comment type="disease" evidence="4 5 6 12 13">
    <disease id="DI-03475">
        <name>Short-rib thoracic dysplasia 9 with or without polydactyly</name>
        <acronym>SRTD9</acronym>
        <description>A form of short-rib thoracic dysplasia, a group of autosomal recessive ciliopathies that are characterized by a constricted thoracic cage, short ribs, shortened tubular bones, and a 'trident' appearance of the acetabular roof. Polydactyly is variably present. Non-skeletal involvement can include cleft lip/palate as well as anomalies of major organs such as the brain, eye, heart, kidneys, liver, pancreas, intestines, and genitalia. Some forms of the disease are lethal in the neonatal period due to respiratory insufficiency secondary to a severely restricted thoracic cage, whereas others are compatible with life. Disease spectrum encompasses Ellis-van Creveld syndrome, asphyxiating thoracic dystrophy (Jeune syndrome), Mainzer-Saldino syndrome, and short rib-polydactyly syndrome. SRTD9 is characterized by phalangeal cone-shaped epiphyses, chronic renal disease, nearly constant retinal dystrophy, and mild radiographic abnormality of the proximal femur. Occasional features include short stature, cerebellar ataxia, and hepatic fibrosis.</description>
        <dbReference type="MIM" id="266920"/>
    </disease>
    <text>The disease is caused by variants affecting the gene represented in this entry.</text>
</comment>
<comment type="disease" evidence="8 9 10">
    <disease id="DI-05130">
        <name>Retinitis pigmentosa 80</name>
        <acronym>RP80</acronym>
        <description>A retinal dystrophy belonging to the group of pigmentary retinopathies. Retinitis pigmentosa is characterized by retinal pigment deposits visible on fundus examination and primary loss of rod photoreceptor cells followed by secondary loss of cone photoreceptors. Patients typically have night vision blindness and loss of midperipheral visual field. As their condition progresses, they lose their far peripheral visual field and eventually central vision as well. RP80 inheritance is autosomal recessive.</description>
        <dbReference type="MIM" id="617781"/>
    </disease>
    <text>The disease may be caused by variants affecting the gene represented in this entry.</text>
</comment>
<comment type="sequence caution" evidence="18">
    <conflict type="erroneous initiation">
        <sequence resource="EMBL-CDS" id="BAA25516"/>
    </conflict>
    <text>Extended N-terminus.</text>
</comment>
<name>IF140_HUMAN</name>